<feature type="chain" id="PRO_0000315317" description="Heat shock protein HspQ">
    <location>
        <begin position="1"/>
        <end position="105"/>
    </location>
</feature>
<organism>
    <name type="scientific">Sodalis glossinidius (strain morsitans)</name>
    <dbReference type="NCBI Taxonomy" id="343509"/>
    <lineage>
        <taxon>Bacteria</taxon>
        <taxon>Pseudomonadati</taxon>
        <taxon>Pseudomonadota</taxon>
        <taxon>Gammaproteobacteria</taxon>
        <taxon>Enterobacterales</taxon>
        <taxon>Bruguierivoracaceae</taxon>
        <taxon>Sodalis</taxon>
    </lineage>
</organism>
<sequence length="105" mass="11883">MIASKFGIGQQVRHKLLGYLGVIIDVDPEYSLEKPSLDDIAADDSLRTAPWYHVVMEDEEGKPVHIYLAEAQLGYESFPVHPEQPTLDELAESIRLQLQAPRLRN</sequence>
<gene>
    <name evidence="1" type="primary">hspQ</name>
    <name type="ordered locus">SG1034</name>
</gene>
<evidence type="ECO:0000255" key="1">
    <source>
        <dbReference type="HAMAP-Rule" id="MF_01194"/>
    </source>
</evidence>
<proteinExistence type="inferred from homology"/>
<comment type="function">
    <text evidence="1">Involved in the degradation of certain denaturated proteins, including DnaA, during heat shock stress.</text>
</comment>
<comment type="subcellular location">
    <subcellularLocation>
        <location evidence="1">Cytoplasm</location>
    </subcellularLocation>
</comment>
<comment type="similarity">
    <text evidence="1">Belongs to the HspQ family.</text>
</comment>
<dbReference type="EMBL" id="AP008232">
    <property type="protein sequence ID" value="BAE74309.1"/>
    <property type="molecule type" value="Genomic_DNA"/>
</dbReference>
<dbReference type="RefSeq" id="WP_011410894.1">
    <property type="nucleotide sequence ID" value="NC_007712.1"/>
</dbReference>
<dbReference type="SMR" id="Q2NU66"/>
<dbReference type="STRING" id="343509.SG1034"/>
<dbReference type="KEGG" id="sgl:SG1034"/>
<dbReference type="eggNOG" id="COG3785">
    <property type="taxonomic scope" value="Bacteria"/>
</dbReference>
<dbReference type="HOGENOM" id="CLU_123865_1_0_6"/>
<dbReference type="OrthoDB" id="9806050at2"/>
<dbReference type="Proteomes" id="UP000001932">
    <property type="component" value="Chromosome"/>
</dbReference>
<dbReference type="GO" id="GO:0005737">
    <property type="term" value="C:cytoplasm"/>
    <property type="evidence" value="ECO:0007669"/>
    <property type="project" value="UniProtKB-SubCell"/>
</dbReference>
<dbReference type="GO" id="GO:0003677">
    <property type="term" value="F:DNA binding"/>
    <property type="evidence" value="ECO:0007669"/>
    <property type="project" value="InterPro"/>
</dbReference>
<dbReference type="GO" id="GO:0009408">
    <property type="term" value="P:response to heat"/>
    <property type="evidence" value="ECO:0007669"/>
    <property type="project" value="UniProtKB-UniRule"/>
</dbReference>
<dbReference type="Gene3D" id="2.30.30.390">
    <property type="entry name" value="Hemimethylated DNA-binding domain"/>
    <property type="match status" value="1"/>
</dbReference>
<dbReference type="HAMAP" id="MF_01194">
    <property type="entry name" value="HspQ"/>
    <property type="match status" value="1"/>
</dbReference>
<dbReference type="InterPro" id="IPR011722">
    <property type="entry name" value="Hemimethylated_DNA-bd_dom"/>
</dbReference>
<dbReference type="InterPro" id="IPR036623">
    <property type="entry name" value="Hemimethylated_DNA-bd_sf"/>
</dbReference>
<dbReference type="InterPro" id="IPR022866">
    <property type="entry name" value="HspQ"/>
</dbReference>
<dbReference type="NCBIfam" id="NF010729">
    <property type="entry name" value="PRK14129.1"/>
    <property type="match status" value="1"/>
</dbReference>
<dbReference type="NCBIfam" id="TIGR02097">
    <property type="entry name" value="yccV"/>
    <property type="match status" value="1"/>
</dbReference>
<dbReference type="Pfam" id="PF08755">
    <property type="entry name" value="YccV-like"/>
    <property type="match status" value="1"/>
</dbReference>
<dbReference type="SMART" id="SM00992">
    <property type="entry name" value="YccV-like"/>
    <property type="match status" value="1"/>
</dbReference>
<dbReference type="SUPFAM" id="SSF141255">
    <property type="entry name" value="YccV-like"/>
    <property type="match status" value="1"/>
</dbReference>
<protein>
    <recommendedName>
        <fullName evidence="1">Heat shock protein HspQ</fullName>
    </recommendedName>
</protein>
<reference key="1">
    <citation type="journal article" date="2006" name="Genome Res.">
        <title>Massive genome erosion and functional adaptations provide insights into the symbiotic lifestyle of Sodalis glossinidius in the tsetse host.</title>
        <authorList>
            <person name="Toh H."/>
            <person name="Weiss B.L."/>
            <person name="Perkin S.A.H."/>
            <person name="Yamashita A."/>
            <person name="Oshima K."/>
            <person name="Hattori M."/>
            <person name="Aksoy S."/>
        </authorList>
    </citation>
    <scope>NUCLEOTIDE SEQUENCE [LARGE SCALE GENOMIC DNA]</scope>
    <source>
        <strain>morsitans</strain>
    </source>
</reference>
<name>HSPQ_SODGM</name>
<keyword id="KW-0963">Cytoplasm</keyword>
<keyword id="KW-0346">Stress response</keyword>
<accession>Q2NU66</accession>